<comment type="function">
    <text evidence="8">Component of the Mediator complex, a coactivator involved in the regulated transcription of nearly all RNA polymerase II-dependent genes. Mediator functions as a bridge to convey information from gene-specific regulatory proteins to the basal RNA polymerase II transcription machinery. Mediator is recruited to promoters by direct interactions with regulatory proteins and serves as a scaffold for the assembly of a functional preinitiation complex with RNA polymerase II and the general transcription factors.</text>
</comment>
<comment type="subunit">
    <text evidence="3 4 5 6 7">Component of the Mediator complex, which is composed of MED1, MED4, MED6, MED7, MED8, MED9, MED10, MED11, MED12, MED13, MED13L, MED14, MED15, MED16, MED17, MED18, MED19, MED20, MED21, MED22, MED23, MED24, MED25, MED26, MED27, MED29, MED30, MED31, CCNC, CDK8 and CDC2L6/CDK11. The MED12, MED13, CCNC and CDK8 subunits form a distinct module termed the CDK8 module. Mediator containing the CDK8 module is less active than Mediator lacking this module in supporting transcriptional activation. Individual preparations of the Mediator complex lacking one or more distinct subunits have been variously termed ARC, CRSP, DRIP, PC2, SMCC and TRAP.</text>
</comment>
<comment type="interaction">
    <interactant intactId="EBI-394440">
        <id>Q9UHV7</id>
    </interactant>
    <interactant intactId="EBI-311161">
        <id>Q9ULK4</id>
        <label>MED23</label>
    </interactant>
    <organismsDiffer>false</organismsDiffer>
    <experiments>3</experiments>
</comment>
<comment type="subcellular location">
    <subcellularLocation>
        <location>Nucleus</location>
    </subcellularLocation>
</comment>
<comment type="tissue specificity">
    <text evidence="3">Ubiquitous.</text>
</comment>
<comment type="disease" evidence="9">
    <disease id="DI-05748">
        <name>Intellectual developmental disorder, autosomal dominant 61</name>
        <acronym>MRD61</acronym>
        <description>An autosomal dominant form of intellectual disability, a disorder characterized by significantly below average general intellectual functioning associated with impairments in adaptive behavior and manifested during the developmental period. MRD61 is characterized by global developmental delay apparent in infancy with mildly impaired intellectual development, expressive speech delay, and behavioral abnormalities, including autism spectrum disorder and attention deficit-hyperactivity disorder. Additional features are highly variable and may include non-specific dysmorphic features, obstipation, ocular anomalies, and poor overall growth.</description>
        <dbReference type="MIM" id="618009"/>
    </disease>
    <text>The disease is caused by variants affecting the gene represented in this entry.</text>
</comment>
<comment type="similarity">
    <text evidence="10">Belongs to the Mediator complex subunit 13 family.</text>
</comment>
<comment type="sequence caution" evidence="10">
    <conflict type="frameshift">
        <sequence resource="EMBL-CDS" id="AAD22032"/>
    </conflict>
</comment>
<gene>
    <name evidence="11" type="primary">MED13</name>
    <name type="synonym">ARC250</name>
    <name type="synonym">KIAA0593</name>
    <name type="synonym">THRAP1</name>
    <name type="synonym">TRAP240</name>
</gene>
<feature type="chain" id="PRO_0000065584" description="Mediator of RNA polymerase II transcription subunit 13">
    <location>
        <begin position="1"/>
        <end position="2174"/>
    </location>
</feature>
<feature type="region of interest" description="Disordered" evidence="2">
    <location>
        <begin position="435"/>
        <end position="477"/>
    </location>
</feature>
<feature type="region of interest" description="Disordered" evidence="2">
    <location>
        <begin position="709"/>
        <end position="735"/>
    </location>
</feature>
<feature type="region of interest" description="Disordered" evidence="2">
    <location>
        <begin position="749"/>
        <end position="769"/>
    </location>
</feature>
<feature type="region of interest" description="Disordered" evidence="2">
    <location>
        <begin position="787"/>
        <end position="816"/>
    </location>
</feature>
<feature type="region of interest" description="Disordered" evidence="2">
    <location>
        <begin position="959"/>
        <end position="1054"/>
    </location>
</feature>
<feature type="region of interest" description="Disordered" evidence="2">
    <location>
        <begin position="1484"/>
        <end position="1505"/>
    </location>
</feature>
<feature type="region of interest" description="Disordered" evidence="2">
    <location>
        <begin position="1557"/>
        <end position="1617"/>
    </location>
</feature>
<feature type="region of interest" description="Disordered" evidence="2">
    <location>
        <begin position="2015"/>
        <end position="2048"/>
    </location>
</feature>
<feature type="short sequence motif" description="LXXLL motif 1">
    <location>
        <begin position="1188"/>
        <end position="1192"/>
    </location>
</feature>
<feature type="short sequence motif" description="LXXLL motif 2">
    <location>
        <begin position="1279"/>
        <end position="1283"/>
    </location>
</feature>
<feature type="compositionally biased region" description="Low complexity" evidence="2">
    <location>
        <begin position="438"/>
        <end position="451"/>
    </location>
</feature>
<feature type="compositionally biased region" description="Basic and acidic residues" evidence="2">
    <location>
        <begin position="457"/>
        <end position="469"/>
    </location>
</feature>
<feature type="compositionally biased region" description="Basic and acidic residues" evidence="2">
    <location>
        <begin position="709"/>
        <end position="730"/>
    </location>
</feature>
<feature type="compositionally biased region" description="Basic and acidic residues" evidence="2">
    <location>
        <begin position="805"/>
        <end position="815"/>
    </location>
</feature>
<feature type="compositionally biased region" description="Low complexity" evidence="2">
    <location>
        <begin position="992"/>
        <end position="1003"/>
    </location>
</feature>
<feature type="compositionally biased region" description="Pro residues" evidence="2">
    <location>
        <begin position="1004"/>
        <end position="1015"/>
    </location>
</feature>
<feature type="compositionally biased region" description="Polar residues" evidence="2">
    <location>
        <begin position="1040"/>
        <end position="1053"/>
    </location>
</feature>
<feature type="compositionally biased region" description="Polar residues" evidence="2">
    <location>
        <begin position="1484"/>
        <end position="1498"/>
    </location>
</feature>
<feature type="compositionally biased region" description="Polar residues" evidence="2">
    <location>
        <begin position="1563"/>
        <end position="1606"/>
    </location>
</feature>
<feature type="modified residue" description="Phosphoserine" evidence="14">
    <location>
        <position position="395"/>
    </location>
</feature>
<feature type="modified residue" description="Phosphoserine" evidence="13">
    <location>
        <position position="500"/>
    </location>
</feature>
<feature type="modified residue" description="Phosphoserine" evidence="12 14">
    <location>
        <position position="504"/>
    </location>
</feature>
<feature type="modified residue" description="Phosphoserine" evidence="1">
    <location>
        <position position="530"/>
    </location>
</feature>
<feature type="modified residue" description="Phosphoserine" evidence="12">
    <location>
        <position position="537"/>
    </location>
</feature>
<feature type="modified residue" description="Phosphoserine" evidence="14">
    <location>
        <position position="826"/>
    </location>
</feature>
<feature type="modified residue" description="Phosphoserine" evidence="14">
    <location>
        <position position="890"/>
    </location>
</feature>
<feature type="modified residue" description="Phosphoserine" evidence="13 15">
    <location>
        <position position="1029"/>
    </location>
</feature>
<feature type="sequence variant" id="VAR_083556" description="In MRD61." evidence="9">
    <location>
        <begin position="131"/>
        <end position="2174"/>
    </location>
</feature>
<feature type="sequence variant" id="VAR_083557" description="In MRD61; dbSNP:rs1603405457." evidence="9">
    <original>T</original>
    <variation>I</variation>
    <location>
        <position position="326"/>
    </location>
</feature>
<feature type="sequence variant" id="VAR_083558" description="In MRD61." evidence="9">
    <location>
        <position position="326"/>
    </location>
</feature>
<feature type="sequence variant" id="VAR_083559" description="In MRD61." evidence="9">
    <original>P</original>
    <variation>Q</variation>
    <location>
        <position position="327"/>
    </location>
</feature>
<feature type="sequence variant" id="VAR_083560" description="In MRD61." evidence="9">
    <original>P</original>
    <variation>S</variation>
    <location>
        <position position="327"/>
    </location>
</feature>
<feature type="sequence variant" id="VAR_083561" description="In MRD61; uncertain significance." evidence="9">
    <original>P</original>
    <variation>T</variation>
    <location>
        <position position="540"/>
    </location>
</feature>
<feature type="sequence variant" id="VAR_083562" description="In MRD61." evidence="9">
    <location>
        <begin position="582"/>
        <end position="2174"/>
    </location>
</feature>
<feature type="sequence variant" id="VAR_057792" description="In dbSNP:rs34805963.">
    <original>A</original>
    <variation>P</variation>
    <location>
        <position position="1370"/>
    </location>
</feature>
<feature type="sequence variant" id="VAR_057793" description="In dbSNP:rs35996128.">
    <original>A</original>
    <variation>P</variation>
    <location>
        <position position="1385"/>
    </location>
</feature>
<feature type="sequence variant" id="VAR_083563" description="In MRD61; no effect on protein levels." evidence="9">
    <location>
        <begin position="1400"/>
        <end position="2174"/>
    </location>
</feature>
<feature type="sequence variant" id="VAR_083564" description="In MRD61; uncertain significance." evidence="9">
    <original>Q</original>
    <variation>K</variation>
    <location>
        <position position="2060"/>
    </location>
</feature>
<feature type="sequence variant" id="VAR_083565" description="In MRD61; uncertain significance." evidence="9">
    <original>A</original>
    <variation>V</variation>
    <location>
        <position position="2064"/>
    </location>
</feature>
<feature type="sequence conflict" description="In Ref. 1; AAD22032." evidence="10" ref="1">
    <original>V</original>
    <variation>M</variation>
    <location>
        <position position="106"/>
    </location>
</feature>
<feature type="sequence conflict" description="In Ref. 1; AAD22032." evidence="10" ref="1">
    <original>R</original>
    <variation>K</variation>
    <location>
        <position position="392"/>
    </location>
</feature>
<feature type="sequence conflict" description="In Ref. 1; AAD22032." evidence="10" ref="1">
    <original>K</original>
    <variation>E</variation>
    <location>
        <position position="467"/>
    </location>
</feature>
<feature type="sequence conflict" description="In Ref. 1; AA sequence." evidence="10" ref="1">
    <original>K</original>
    <variation>A</variation>
    <location>
        <position position="712"/>
    </location>
</feature>
<feature type="sequence conflict" description="In Ref. 1; AAD22032." evidence="10" ref="1">
    <original>K</original>
    <variation>R</variation>
    <location>
        <position position="800"/>
    </location>
</feature>
<feature type="sequence conflict" description="In Ref. 1; AAD22032." evidence="10" ref="1">
    <original>P</original>
    <variation>L</variation>
    <location>
        <position position="930"/>
    </location>
</feature>
<feature type="sequence conflict" description="In Ref. 1; AAD22032." evidence="10" ref="1">
    <original>F</original>
    <variation>C</variation>
    <location>
        <position position="984"/>
    </location>
</feature>
<feature type="sequence conflict" description="In Ref. 1; AAD22032." evidence="10" ref="1">
    <original>F</original>
    <variation>S</variation>
    <location>
        <position position="1090"/>
    </location>
</feature>
<keyword id="KW-0002">3D-structure</keyword>
<keyword id="KW-0010">Activator</keyword>
<keyword id="KW-0903">Direct protein sequencing</keyword>
<keyword id="KW-0225">Disease variant</keyword>
<keyword id="KW-0991">Intellectual disability</keyword>
<keyword id="KW-0539">Nucleus</keyword>
<keyword id="KW-0597">Phosphoprotein</keyword>
<keyword id="KW-1267">Proteomics identification</keyword>
<keyword id="KW-1185">Reference proteome</keyword>
<keyword id="KW-0677">Repeat</keyword>
<keyword id="KW-0678">Repressor</keyword>
<keyword id="KW-0804">Transcription</keyword>
<keyword id="KW-0805">Transcription regulation</keyword>
<dbReference type="EMBL" id="AF117754">
    <property type="protein sequence ID" value="AAD22032.1"/>
    <property type="status" value="ALT_FRAME"/>
    <property type="molecule type" value="mRNA"/>
</dbReference>
<dbReference type="EMBL" id="AC008158">
    <property type="status" value="NOT_ANNOTATED_CDS"/>
    <property type="molecule type" value="Genomic_DNA"/>
</dbReference>
<dbReference type="EMBL" id="AC018628">
    <property type="status" value="NOT_ANNOTATED_CDS"/>
    <property type="molecule type" value="Genomic_DNA"/>
</dbReference>
<dbReference type="EMBL" id="AC060798">
    <property type="status" value="NOT_ANNOTATED_CDS"/>
    <property type="molecule type" value="Genomic_DNA"/>
</dbReference>
<dbReference type="EMBL" id="CH471179">
    <property type="protein sequence ID" value="EAW51438.1"/>
    <property type="molecule type" value="Genomic_DNA"/>
</dbReference>
<dbReference type="EMBL" id="BC140891">
    <property type="protein sequence ID" value="AAI40892.1"/>
    <property type="molecule type" value="mRNA"/>
</dbReference>
<dbReference type="EMBL" id="AB011165">
    <property type="protein sequence ID" value="BAA25519.2"/>
    <property type="molecule type" value="mRNA"/>
</dbReference>
<dbReference type="CCDS" id="CCDS42366.1"/>
<dbReference type="PIR" id="T01238">
    <property type="entry name" value="T01238"/>
</dbReference>
<dbReference type="RefSeq" id="NP_005112.2">
    <property type="nucleotide sequence ID" value="NM_005121.3"/>
</dbReference>
<dbReference type="PDB" id="8T9D">
    <property type="method" value="EM"/>
    <property type="resolution" value="4.66 A"/>
    <property type="chains" value="9=1-2174"/>
</dbReference>
<dbReference type="PDB" id="8TQ2">
    <property type="method" value="EM"/>
    <property type="resolution" value="3.80 A"/>
    <property type="chains" value="D=1-2174"/>
</dbReference>
<dbReference type="PDB" id="8TQC">
    <property type="method" value="EM"/>
    <property type="resolution" value="3.80 A"/>
    <property type="chains" value="D=1-2174"/>
</dbReference>
<dbReference type="PDB" id="8TQW">
    <property type="method" value="EM"/>
    <property type="resolution" value="8.20 A"/>
    <property type="chains" value="d=1-2174"/>
</dbReference>
<dbReference type="PDB" id="8TRH">
    <property type="method" value="EM"/>
    <property type="resolution" value="3.70 A"/>
    <property type="chains" value="d=1-2174"/>
</dbReference>
<dbReference type="PDBsum" id="8T9D"/>
<dbReference type="PDBsum" id="8TQ2"/>
<dbReference type="PDBsum" id="8TQC"/>
<dbReference type="PDBsum" id="8TQW"/>
<dbReference type="PDBsum" id="8TRH"/>
<dbReference type="EMDB" id="EMD-41107"/>
<dbReference type="EMDB" id="EMD-41499"/>
<dbReference type="EMDB" id="EMD-41502"/>
<dbReference type="EMDB" id="EMD-41565"/>
<dbReference type="EMDB" id="EMD-41580"/>
<dbReference type="SMR" id="Q9UHV7"/>
<dbReference type="BioGRID" id="115294">
    <property type="interactions" value="93"/>
</dbReference>
<dbReference type="ComplexPortal" id="CPX-3232">
    <property type="entry name" value="CKM complex variant 1"/>
</dbReference>
<dbReference type="ComplexPortal" id="CPX-3263">
    <property type="entry name" value="CKM complex variant 2"/>
</dbReference>
<dbReference type="CORUM" id="Q9UHV7"/>
<dbReference type="DIP" id="DIP-31468N"/>
<dbReference type="FunCoup" id="Q9UHV7">
    <property type="interactions" value="4125"/>
</dbReference>
<dbReference type="IntAct" id="Q9UHV7">
    <property type="interactions" value="49"/>
</dbReference>
<dbReference type="MINT" id="Q9UHV7"/>
<dbReference type="STRING" id="9606.ENSP00000380888"/>
<dbReference type="GlyGen" id="Q9UHV7">
    <property type="glycosylation" value="10 sites, 1 O-linked glycan (5 sites)"/>
</dbReference>
<dbReference type="iPTMnet" id="Q9UHV7"/>
<dbReference type="PhosphoSitePlus" id="Q9UHV7"/>
<dbReference type="BioMuta" id="MED13"/>
<dbReference type="DMDM" id="317373421"/>
<dbReference type="jPOST" id="Q9UHV7"/>
<dbReference type="MassIVE" id="Q9UHV7"/>
<dbReference type="PaxDb" id="9606-ENSP00000380888"/>
<dbReference type="PeptideAtlas" id="Q9UHV7"/>
<dbReference type="ProteomicsDB" id="84417"/>
<dbReference type="Pumba" id="Q9UHV7"/>
<dbReference type="Antibodypedia" id="31215">
    <property type="antibodies" value="80 antibodies from 23 providers"/>
</dbReference>
<dbReference type="DNASU" id="9969"/>
<dbReference type="Ensembl" id="ENST00000397786.7">
    <property type="protein sequence ID" value="ENSP00000380888.2"/>
    <property type="gene ID" value="ENSG00000108510.10"/>
</dbReference>
<dbReference type="GeneID" id="9969"/>
<dbReference type="KEGG" id="hsa:9969"/>
<dbReference type="MANE-Select" id="ENST00000397786.7">
    <property type="protein sequence ID" value="ENSP00000380888.2"/>
    <property type="RefSeq nucleotide sequence ID" value="NM_005121.3"/>
    <property type="RefSeq protein sequence ID" value="NP_005112.2"/>
</dbReference>
<dbReference type="UCSC" id="uc002izo.3">
    <property type="organism name" value="human"/>
</dbReference>
<dbReference type="AGR" id="HGNC:22474"/>
<dbReference type="CTD" id="9969"/>
<dbReference type="DisGeNET" id="9969"/>
<dbReference type="GeneCards" id="MED13"/>
<dbReference type="HGNC" id="HGNC:22474">
    <property type="gene designation" value="MED13"/>
</dbReference>
<dbReference type="HPA" id="ENSG00000108510">
    <property type="expression patterns" value="Low tissue specificity"/>
</dbReference>
<dbReference type="MalaCards" id="MED13"/>
<dbReference type="MIM" id="603808">
    <property type="type" value="gene"/>
</dbReference>
<dbReference type="MIM" id="618009">
    <property type="type" value="phenotype"/>
</dbReference>
<dbReference type="neXtProt" id="NX_Q9UHV7"/>
<dbReference type="OpenTargets" id="ENSG00000108510"/>
<dbReference type="Orphanet" id="528084">
    <property type="disease" value="Non-specific syndromic intellectual disability"/>
</dbReference>
<dbReference type="PharmGKB" id="PA162395168"/>
<dbReference type="VEuPathDB" id="HostDB:ENSG00000108510"/>
<dbReference type="eggNOG" id="KOG3600">
    <property type="taxonomic scope" value="Eukaryota"/>
</dbReference>
<dbReference type="GeneTree" id="ENSGT00390000013680"/>
<dbReference type="HOGENOM" id="CLU_000508_0_0_1"/>
<dbReference type="InParanoid" id="Q9UHV7"/>
<dbReference type="OMA" id="WWGEDPS"/>
<dbReference type="OrthoDB" id="103819at2759"/>
<dbReference type="PAN-GO" id="Q9UHV7">
    <property type="GO annotations" value="3 GO annotations based on evolutionary models"/>
</dbReference>
<dbReference type="PhylomeDB" id="Q9UHV7"/>
<dbReference type="TreeFam" id="TF316867"/>
<dbReference type="PathwayCommons" id="Q9UHV7"/>
<dbReference type="Reactome" id="R-HSA-1989781">
    <property type="pathway name" value="PPARA activates gene expression"/>
</dbReference>
<dbReference type="Reactome" id="R-HSA-212436">
    <property type="pathway name" value="Generic Transcription Pathway"/>
</dbReference>
<dbReference type="Reactome" id="R-HSA-381340">
    <property type="pathway name" value="Transcriptional regulation of white adipocyte differentiation"/>
</dbReference>
<dbReference type="Reactome" id="R-HSA-9833110">
    <property type="pathway name" value="RSV-host interactions"/>
</dbReference>
<dbReference type="Reactome" id="R-HSA-9841922">
    <property type="pathway name" value="MLL4 and MLL3 complexes regulate expression of PPARG target genes in adipogenesis and hepatic steatosis"/>
</dbReference>
<dbReference type="SignaLink" id="Q9UHV7"/>
<dbReference type="SIGNOR" id="Q9UHV7"/>
<dbReference type="BioGRID-ORCS" id="9969">
    <property type="hits" value="39 hits in 1184 CRISPR screens"/>
</dbReference>
<dbReference type="ChiTaRS" id="MED13">
    <property type="organism name" value="human"/>
</dbReference>
<dbReference type="GeneWiki" id="MED13"/>
<dbReference type="GenomeRNAi" id="9969"/>
<dbReference type="Pharos" id="Q9UHV7">
    <property type="development level" value="Tbio"/>
</dbReference>
<dbReference type="PRO" id="PR:Q9UHV7"/>
<dbReference type="Proteomes" id="UP000005640">
    <property type="component" value="Chromosome 17"/>
</dbReference>
<dbReference type="RNAct" id="Q9UHV7">
    <property type="molecule type" value="protein"/>
</dbReference>
<dbReference type="Bgee" id="ENSG00000108510">
    <property type="expression patterns" value="Expressed in endothelial cell and 210 other cell types or tissues"/>
</dbReference>
<dbReference type="ExpressionAtlas" id="Q9UHV7">
    <property type="expression patterns" value="baseline and differential"/>
</dbReference>
<dbReference type="GO" id="GO:1990508">
    <property type="term" value="C:CKM complex"/>
    <property type="evidence" value="ECO:0000353"/>
    <property type="project" value="ComplexPortal"/>
</dbReference>
<dbReference type="GO" id="GO:0016592">
    <property type="term" value="C:mediator complex"/>
    <property type="evidence" value="ECO:0000314"/>
    <property type="project" value="UniProtKB"/>
</dbReference>
<dbReference type="GO" id="GO:0016020">
    <property type="term" value="C:membrane"/>
    <property type="evidence" value="ECO:0007005"/>
    <property type="project" value="UniProtKB"/>
</dbReference>
<dbReference type="GO" id="GO:0005654">
    <property type="term" value="C:nucleoplasm"/>
    <property type="evidence" value="ECO:0000314"/>
    <property type="project" value="HPA"/>
</dbReference>
<dbReference type="GO" id="GO:0005634">
    <property type="term" value="C:nucleus"/>
    <property type="evidence" value="ECO:0000314"/>
    <property type="project" value="UniProtKB"/>
</dbReference>
<dbReference type="GO" id="GO:0046966">
    <property type="term" value="F:nuclear thyroid hormone receptor binding"/>
    <property type="evidence" value="ECO:0000314"/>
    <property type="project" value="UniProtKB"/>
</dbReference>
<dbReference type="GO" id="GO:0042809">
    <property type="term" value="F:nuclear vitamin D receptor binding"/>
    <property type="evidence" value="ECO:0000303"/>
    <property type="project" value="UniProtKB"/>
</dbReference>
<dbReference type="GO" id="GO:0003713">
    <property type="term" value="F:transcription coactivator activity"/>
    <property type="evidence" value="ECO:0000314"/>
    <property type="project" value="UniProtKB"/>
</dbReference>
<dbReference type="GO" id="GO:0003712">
    <property type="term" value="F:transcription coregulator activity"/>
    <property type="evidence" value="ECO:0000314"/>
    <property type="project" value="UniProtKB"/>
</dbReference>
<dbReference type="GO" id="GO:0042632">
    <property type="term" value="P:cholesterol homeostasis"/>
    <property type="evidence" value="ECO:0007669"/>
    <property type="project" value="Ensembl"/>
</dbReference>
<dbReference type="GO" id="GO:0045893">
    <property type="term" value="P:positive regulation of DNA-templated transcription"/>
    <property type="evidence" value="ECO:0000314"/>
    <property type="project" value="UniProtKB"/>
</dbReference>
<dbReference type="GO" id="GO:0045944">
    <property type="term" value="P:positive regulation of transcription by RNA polymerase II"/>
    <property type="evidence" value="ECO:0000314"/>
    <property type="project" value="MGI"/>
</dbReference>
<dbReference type="GO" id="GO:0060261">
    <property type="term" value="P:positive regulation of transcription initiation by RNA polymerase II"/>
    <property type="evidence" value="ECO:0000314"/>
    <property type="project" value="UniProtKB"/>
</dbReference>
<dbReference type="GO" id="GO:0070328">
    <property type="term" value="P:triglyceride homeostasis"/>
    <property type="evidence" value="ECO:0007669"/>
    <property type="project" value="Ensembl"/>
</dbReference>
<dbReference type="InterPro" id="IPR009401">
    <property type="entry name" value="Med13_C"/>
</dbReference>
<dbReference type="InterPro" id="IPR051139">
    <property type="entry name" value="Mediator_complx_sub13"/>
</dbReference>
<dbReference type="InterPro" id="IPR041285">
    <property type="entry name" value="MID_MedPIWI"/>
</dbReference>
<dbReference type="PANTHER" id="PTHR48249">
    <property type="entry name" value="MEDIATOR OF RNA POLYMERASE II TRANSCRIPTION SUBUNIT 13"/>
    <property type="match status" value="1"/>
</dbReference>
<dbReference type="PANTHER" id="PTHR48249:SF4">
    <property type="entry name" value="MEDIATOR OF RNA POLYMERASE II TRANSCRIPTION SUBUNIT 13"/>
    <property type="match status" value="1"/>
</dbReference>
<dbReference type="Pfam" id="PF06333">
    <property type="entry name" value="Med13_C"/>
    <property type="match status" value="1"/>
</dbReference>
<dbReference type="Pfam" id="PF18296">
    <property type="entry name" value="MID_MedPIWI"/>
    <property type="match status" value="1"/>
</dbReference>
<evidence type="ECO:0000250" key="1">
    <source>
        <dbReference type="UniProtKB" id="Q5SWW4"/>
    </source>
</evidence>
<evidence type="ECO:0000256" key="2">
    <source>
        <dbReference type="SAM" id="MobiDB-lite"/>
    </source>
</evidence>
<evidence type="ECO:0000269" key="3">
    <source>
    </source>
</evidence>
<evidence type="ECO:0000269" key="4">
    <source>
    </source>
</evidence>
<evidence type="ECO:0000269" key="5">
    <source>
    </source>
</evidence>
<evidence type="ECO:0000269" key="6">
    <source>
    </source>
</evidence>
<evidence type="ECO:0000269" key="7">
    <source>
    </source>
</evidence>
<evidence type="ECO:0000269" key="8">
    <source>
    </source>
</evidence>
<evidence type="ECO:0000269" key="9">
    <source>
    </source>
</evidence>
<evidence type="ECO:0000305" key="10"/>
<evidence type="ECO:0000312" key="11">
    <source>
        <dbReference type="HGNC" id="HGNC:22474"/>
    </source>
</evidence>
<evidence type="ECO:0007744" key="12">
    <source>
    </source>
</evidence>
<evidence type="ECO:0007744" key="13">
    <source>
    </source>
</evidence>
<evidence type="ECO:0007744" key="14">
    <source>
    </source>
</evidence>
<evidence type="ECO:0007744" key="15">
    <source>
    </source>
</evidence>
<sequence length="2174" mass="239297">MSASFVPNGASLEDCHCNLFCLADLTGIKWKKYVWQGPTSAPILFPVTEEDPILSSFSRCLKADVLGVWRRDQRPGRRELWIFWWGEDPSFADLIHHDLSEEEDGVWENGLSYECRTLLFKAVHNLLERCLMNRNFVRIGKWFVKPYEKDEKPINKSEHLSCSFTFFLHGDSNVCTSVEINQHQPVYLLSEEHITLAQQSNSPFQVILCPFGLNGTLTGQAFKMSDSATKKLIGEWKQFYPISCCLKEMSEEKQEDMDWEDDSLAAVEVLVAGVRMIYPACFVLVPQSDIPTPSPVGSTHCSSSCLGVHQVPASTRDPAMSSVTLTPPTSPEEVQTVDPQSVQKWVKFSSVSDGFNSDSTSHHGGKIPRKLANHVVDRVWQECNMNRAQNKRKYSASSGGLCEEATAAKVASWDFVEATQRTNCSCLRHKNLKSRNAGQQGQAPSLGQQQQILPKHKTNEKQEKSEKPQKRPLTPFHHRVSVSDDVGMDADSASQRLVISAPDSQVRFSNIRTNDVAKTPQMHGTEMANSPQPPPLSPHPCDVVDEGVTKTPSTPQSQHFYQMPTPDPLVPSKPMEDRIDSLSQSFPPQYQEAVEPTVYVGTAVNLEEDEANIAWKYYKFPKKKDVEFLPPQLPSDKFKDDPVGPFGQESVTSVTELMVQCKKPLKVSDELVQQYQIKNQCLSAIASDAEQEPKIDPYAFVEGDEEFLFPDKKDRQNSEREAGKKHKVEDGTSSVTVLSHEEDAMSLFSPSIKQDAPRPTSHARPPSTSLIYDSDLAVSYTDLDNLFNSDEDELTPGSKKSANGSDDKASCKESKTGNLDPLSCISTADLHKMYPTPPSLEQHIMGFSPMNMNNKEYGSMDTTPGGTVLEGNSSSIGAQFKIEVDEGFCSPKPSEIKDFSYVYKPENCQILVGCSMFAPLKTLPSQYLPPIKLPEECIYRQSWTVGKLELLSSGPSMPFIKEGDGSNMDQEYGTAYTPQTHTSFGMPPSSAPPSNSGAGILPSPSTPRFPTPRTPRTPRTPRGAGGPASAQGSVKYENSDLYSPASTPSTCRPLNSVEPATVPSIPEAHSLYVNLILSESVMNLFKDCNFDSCCICVCNMNIKGADVGVYIPDPTQEAQYRCTCGFSAVMNRKFGNNSGLFLEDELDIIGRNTDCGKEAEKRFEALRATSAEHVNGGLKESEKLSDDLILLLQDQCTNLFSPFGAADQDPFPKSGVISNWVRVEERDCCNDCYLALEHGRQFMDNMSGGKVDEALVKSSCLHPWSKRNDVSMQCSQDILRMLLSLQPVLQDAIQKKRTVRPWGVQGPLTWQQFHKMAGRGSYGTDESPEPLPIPTFLLGYDYDYLVLSPFALPYWERLMLEPYGSQRDIAYVVLCPENEALLNGAKSFFRDLTAIYESCRLGQHRPVSRLLTDGIMRVGSTASKKLSEKLVAEWFSQAADGNNEAFSKLKLYAQVCRYDLGPYLASLPLDSSLLSQPNLVAPTSQSLITPPQMTNTGNANTPSATLASAASSTMTVTSGVAISTSVATANSTLTTASTSSSSSSNLNSGVSSNKLPSFPPFGSMNSNAAGSMSTQANTVQSGQLGGQQTSALQTAGISGESSSLPTQPHPDVSESTMDRDKVGIPTDGDSHAVTYPPAIVVYIIDPFTYENTDESTNSSSVWTLGLLRCFLEMVQTLPPHIKSTVSVQIIPCQYLLQPVKHEDREIYPQHLKSLAFSAFTQCRRPLPTSTNVKTLTGFGPGLAMETALRSPDRPECIRLYAPPFILAPVKDKQTELGETFGEAGQKYNVLFVGYCLSHDQRWILASCTDLYGELLETCIINIDVPNRARRKKSSARKFGLQKLWEWCLGLVQMSSLPWRVVIGRLGRIGHGELKDWSCLLSRRNLQSLSKRLKDMCRMCGISAADSPSILSACLVAMEPQGSFVIMPDSVSTGSVFGRSTTLNMQTSQLNTPQDTSCTHILVFPTSASVQVASATYTTENLDLAFNPNNDGADGMGIFDLLDTGDDLDPDIINILPASPTGSPVHSPGSHYPHGGDAGKGQSTDRLLSTEPHEEVPNILQQPLALGYFVSTAKAGPLPDWFWSACPQAQYQCPLFLKASLHLHVPSVQSDELLHSKHSHPLDSNQTSDVLRFVLEQYNALSWLTCDPATQDRRSCLPIHFVVLNQLYNFIMNML</sequence>
<name>MED13_HUMAN</name>
<organism>
    <name type="scientific">Homo sapiens</name>
    <name type="common">Human</name>
    <dbReference type="NCBI Taxonomy" id="9606"/>
    <lineage>
        <taxon>Eukaryota</taxon>
        <taxon>Metazoa</taxon>
        <taxon>Chordata</taxon>
        <taxon>Craniata</taxon>
        <taxon>Vertebrata</taxon>
        <taxon>Euteleostomi</taxon>
        <taxon>Mammalia</taxon>
        <taxon>Eutheria</taxon>
        <taxon>Euarchontoglires</taxon>
        <taxon>Primates</taxon>
        <taxon>Haplorrhini</taxon>
        <taxon>Catarrhini</taxon>
        <taxon>Hominidae</taxon>
        <taxon>Homo</taxon>
    </lineage>
</organism>
<accession>Q9UHV7</accession>
<accession>B2RU05</accession>
<accession>O60334</accession>
<proteinExistence type="evidence at protein level"/>
<reference key="1">
    <citation type="journal article" date="1999" name="Mol. Cell">
        <title>Identity between TRAP and SMCC complexes indicates novel pathways for the function of nuclear receptors and diverse mammalian activators.</title>
        <authorList>
            <person name="Ito M."/>
            <person name="Yuan C.-X."/>
            <person name="Malik S."/>
            <person name="Gu W."/>
            <person name="Fondell J.D."/>
            <person name="Yamamura S."/>
            <person name="Fu Z.-Y."/>
            <person name="Zhang X."/>
            <person name="Qin J."/>
            <person name="Roeder R.G."/>
        </authorList>
    </citation>
    <scope>NUCLEOTIDE SEQUENCE [MRNA]</scope>
    <scope>PROTEIN SEQUENCE OF 696-713</scope>
    <scope>TISSUE SPECIFICITY</scope>
    <scope>IDENTIFICATION IN TRAP COMPLEX</scope>
    <source>
        <tissue>Cervix carcinoma</tissue>
    </source>
</reference>
<reference key="2">
    <citation type="journal article" date="2006" name="Nature">
        <title>DNA sequence of human chromosome 17 and analysis of rearrangement in the human lineage.</title>
        <authorList>
            <person name="Zody M.C."/>
            <person name="Garber M."/>
            <person name="Adams D.J."/>
            <person name="Sharpe T."/>
            <person name="Harrow J."/>
            <person name="Lupski J.R."/>
            <person name="Nicholson C."/>
            <person name="Searle S.M."/>
            <person name="Wilming L."/>
            <person name="Young S.K."/>
            <person name="Abouelleil A."/>
            <person name="Allen N.R."/>
            <person name="Bi W."/>
            <person name="Bloom T."/>
            <person name="Borowsky M.L."/>
            <person name="Bugalter B.E."/>
            <person name="Butler J."/>
            <person name="Chang J.L."/>
            <person name="Chen C.-K."/>
            <person name="Cook A."/>
            <person name="Corum B."/>
            <person name="Cuomo C.A."/>
            <person name="de Jong P.J."/>
            <person name="DeCaprio D."/>
            <person name="Dewar K."/>
            <person name="FitzGerald M."/>
            <person name="Gilbert J."/>
            <person name="Gibson R."/>
            <person name="Gnerre S."/>
            <person name="Goldstein S."/>
            <person name="Grafham D.V."/>
            <person name="Grocock R."/>
            <person name="Hafez N."/>
            <person name="Hagopian D.S."/>
            <person name="Hart E."/>
            <person name="Norman C.H."/>
            <person name="Humphray S."/>
            <person name="Jaffe D.B."/>
            <person name="Jones M."/>
            <person name="Kamal M."/>
            <person name="Khodiyar V.K."/>
            <person name="LaButti K."/>
            <person name="Laird G."/>
            <person name="Lehoczky J."/>
            <person name="Liu X."/>
            <person name="Lokyitsang T."/>
            <person name="Loveland J."/>
            <person name="Lui A."/>
            <person name="Macdonald P."/>
            <person name="Major J.E."/>
            <person name="Matthews L."/>
            <person name="Mauceli E."/>
            <person name="McCarroll S.A."/>
            <person name="Mihalev A.H."/>
            <person name="Mudge J."/>
            <person name="Nguyen C."/>
            <person name="Nicol R."/>
            <person name="O'Leary S.B."/>
            <person name="Osoegawa K."/>
            <person name="Schwartz D.C."/>
            <person name="Shaw-Smith C."/>
            <person name="Stankiewicz P."/>
            <person name="Steward C."/>
            <person name="Swarbreck D."/>
            <person name="Venkataraman V."/>
            <person name="Whittaker C.A."/>
            <person name="Yang X."/>
            <person name="Zimmer A.R."/>
            <person name="Bradley A."/>
            <person name="Hubbard T."/>
            <person name="Birren B.W."/>
            <person name="Rogers J."/>
            <person name="Lander E.S."/>
            <person name="Nusbaum C."/>
        </authorList>
    </citation>
    <scope>NUCLEOTIDE SEQUENCE [LARGE SCALE GENOMIC DNA]</scope>
</reference>
<reference key="3">
    <citation type="submission" date="2005-09" db="EMBL/GenBank/DDBJ databases">
        <authorList>
            <person name="Mural R.J."/>
            <person name="Istrail S."/>
            <person name="Sutton G.G."/>
            <person name="Florea L."/>
            <person name="Halpern A.L."/>
            <person name="Mobarry C.M."/>
            <person name="Lippert R."/>
            <person name="Walenz B."/>
            <person name="Shatkay H."/>
            <person name="Dew I."/>
            <person name="Miller J.R."/>
            <person name="Flanigan M.J."/>
            <person name="Edwards N.J."/>
            <person name="Bolanos R."/>
            <person name="Fasulo D."/>
            <person name="Halldorsson B.V."/>
            <person name="Hannenhalli S."/>
            <person name="Turner R."/>
            <person name="Yooseph S."/>
            <person name="Lu F."/>
            <person name="Nusskern D.R."/>
            <person name="Shue B.C."/>
            <person name="Zheng X.H."/>
            <person name="Zhong F."/>
            <person name="Delcher A.L."/>
            <person name="Huson D.H."/>
            <person name="Kravitz S.A."/>
            <person name="Mouchard L."/>
            <person name="Reinert K."/>
            <person name="Remington K.A."/>
            <person name="Clark A.G."/>
            <person name="Waterman M.S."/>
            <person name="Eichler E.E."/>
            <person name="Adams M.D."/>
            <person name="Hunkapiller M.W."/>
            <person name="Myers E.W."/>
            <person name="Venter J.C."/>
        </authorList>
    </citation>
    <scope>NUCLEOTIDE SEQUENCE [LARGE SCALE GENOMIC DNA]</scope>
</reference>
<reference key="4">
    <citation type="journal article" date="2004" name="Genome Res.">
        <title>The status, quality, and expansion of the NIH full-length cDNA project: the Mammalian Gene Collection (MGC).</title>
        <authorList>
            <consortium name="The MGC Project Team"/>
        </authorList>
    </citation>
    <scope>NUCLEOTIDE SEQUENCE [LARGE SCALE MRNA]</scope>
    <source>
        <tissue>Brain</tissue>
    </source>
</reference>
<reference key="5">
    <citation type="journal article" date="1998" name="DNA Res.">
        <title>Prediction of the coding sequences of unidentified human genes. IX. The complete sequences of 100 new cDNA clones from brain which can code for large proteins in vitro.</title>
        <authorList>
            <person name="Nagase T."/>
            <person name="Ishikawa K."/>
            <person name="Miyajima N."/>
            <person name="Tanaka A."/>
            <person name="Kotani H."/>
            <person name="Nomura N."/>
            <person name="Ohara O."/>
        </authorList>
    </citation>
    <scope>NUCLEOTIDE SEQUENCE [LARGE SCALE MRNA] OF 170-2174</scope>
    <source>
        <tissue>Brain</tissue>
    </source>
</reference>
<reference key="6">
    <citation type="submission" date="2003-08" db="EMBL/GenBank/DDBJ databases">
        <authorList>
            <person name="Ohara O."/>
            <person name="Nagase T."/>
            <person name="Ishikawa K."/>
        </authorList>
    </citation>
    <scope>SEQUENCE REVISION</scope>
</reference>
<reference key="7">
    <citation type="journal article" date="1999" name="Nature">
        <title>Ligand-dependent transcription activation by nuclear receptors requires the DRIP complex.</title>
        <authorList>
            <person name="Rachez C."/>
            <person name="Lemon B.D."/>
            <person name="Suldan Z."/>
            <person name="Bromleigh V."/>
            <person name="Gamble M."/>
            <person name="Naeaer A.M."/>
            <person name="Erdjument-Bromage H."/>
            <person name="Tempst P."/>
            <person name="Freedman L.P."/>
        </authorList>
    </citation>
    <scope>PROTEIN SEQUENCE OF 1401-1408 AND 1358-1367</scope>
    <scope>IDENTIFICATION IN ARC COMPLEX</scope>
    <source>
        <tissue>Cervix carcinoma</tissue>
    </source>
</reference>
<reference key="8">
    <citation type="journal article" date="1999" name="Nature">
        <title>Composite co-activator ARC mediates chromatin-directed transcriptional activation.</title>
        <authorList>
            <person name="Naeaer A.M."/>
            <person name="Beaurang P.A."/>
            <person name="Zhou S."/>
            <person name="Abraham S."/>
            <person name="Solomon W.B."/>
            <person name="Tjian R."/>
        </authorList>
    </citation>
    <scope>IDENTIFICATION IN ARC COMPLEX</scope>
    <scope>PROTEIN SEQUENCE OF 1429-1438; 1772-1783 AND 2073-2084</scope>
</reference>
<reference key="9">
    <citation type="journal article" date="2004" name="Mol. Cell">
        <title>A set of consensus mammalian mediator subunits identified by multidimensional protein identification technology.</title>
        <authorList>
            <person name="Sato S."/>
            <person name="Tomomori-Sato C."/>
            <person name="Parmely T.J."/>
            <person name="Florens L."/>
            <person name="Zybailov B."/>
            <person name="Swanson S.K."/>
            <person name="Banks C.A.S."/>
            <person name="Jin J."/>
            <person name="Cai Y."/>
            <person name="Washburn M.P."/>
            <person name="Conaway J.W."/>
            <person name="Conaway R.C."/>
        </authorList>
    </citation>
    <scope>IDENTIFICATION BY MASS SPECTROMETRY</scope>
    <scope>IDENTIFICATION IN THE MEDIATOR COMPLEX</scope>
    <scope>INTERACTION OF THE MEDIATOR COMPLEX WITH RNA POLYMERASE II</scope>
</reference>
<reference key="10">
    <citation type="journal article" date="2005" name="Mol. Cell">
        <title>MED1/TRAP220 exists predominantly in a TRAP/Mediator subpopulation enriched in RNA polymerase II and is required for ER-mediated transcription.</title>
        <authorList>
            <person name="Zhang X."/>
            <person name="Krutchinsky A."/>
            <person name="Fukuda A."/>
            <person name="Chen W."/>
            <person name="Yamamura S."/>
            <person name="Chait B.T."/>
            <person name="Roeder R.G."/>
        </authorList>
    </citation>
    <scope>INTERACTION WITH MED1; MED18; MED21; MED28; MED29 AND MED30</scope>
    <scope>IDENTIFICATION BY MASS SPECTROMETRY</scope>
    <scope>IDENTIFICATION IN THE MEDIATOR COMPLEX</scope>
    <scope>ASSOCIATION OF THE MEDIATOR COMPLEX WITH RNA POLYMERASE II</scope>
</reference>
<reference key="11">
    <citation type="journal article" date="2006" name="J. Biol. Chem.">
        <title>Human Mediator enhances basal transcription by facilitating recruitment of transcription factor IIB during preinitiation complex assembly.</title>
        <authorList>
            <person name="Baek H.J."/>
            <person name="Kang Y.K."/>
            <person name="Roeder R.G."/>
        </authorList>
    </citation>
    <scope>FUNCTION</scope>
    <scope>INTERACTION WITH MED1 AND MED10</scope>
</reference>
<reference key="12">
    <citation type="journal article" date="2008" name="Mol. Cell">
        <title>Kinase-selective enrichment enables quantitative phosphoproteomics of the kinome across the cell cycle.</title>
        <authorList>
            <person name="Daub H."/>
            <person name="Olsen J.V."/>
            <person name="Bairlein M."/>
            <person name="Gnad F."/>
            <person name="Oppermann F.S."/>
            <person name="Korner R."/>
            <person name="Greff Z."/>
            <person name="Keri G."/>
            <person name="Stemmann O."/>
            <person name="Mann M."/>
        </authorList>
    </citation>
    <scope>PHOSPHORYLATION [LARGE SCALE ANALYSIS] AT SER-500 AND SER-1029</scope>
    <scope>IDENTIFICATION BY MASS SPECTROMETRY [LARGE SCALE ANALYSIS]</scope>
    <source>
        <tissue>Cervix carcinoma</tissue>
    </source>
</reference>
<reference key="13">
    <citation type="journal article" date="2008" name="Proc. Natl. Acad. Sci. U.S.A.">
        <title>A quantitative atlas of mitotic phosphorylation.</title>
        <authorList>
            <person name="Dephoure N."/>
            <person name="Zhou C."/>
            <person name="Villen J."/>
            <person name="Beausoleil S.A."/>
            <person name="Bakalarski C.E."/>
            <person name="Elledge S.J."/>
            <person name="Gygi S.P."/>
        </authorList>
    </citation>
    <scope>PHOSPHORYLATION [LARGE SCALE ANALYSIS] AT SER-504 AND SER-537</scope>
    <scope>IDENTIFICATION BY MASS SPECTROMETRY [LARGE SCALE ANALYSIS]</scope>
    <source>
        <tissue>Cervix carcinoma</tissue>
    </source>
</reference>
<reference key="14">
    <citation type="journal article" date="2009" name="Mol. Cell. Proteomics">
        <title>Large-scale proteomics analysis of the human kinome.</title>
        <authorList>
            <person name="Oppermann F.S."/>
            <person name="Gnad F."/>
            <person name="Olsen J.V."/>
            <person name="Hornberger R."/>
            <person name="Greff Z."/>
            <person name="Keri G."/>
            <person name="Mann M."/>
            <person name="Daub H."/>
        </authorList>
    </citation>
    <scope>IDENTIFICATION BY MASS SPECTROMETRY [LARGE SCALE ANALYSIS]</scope>
</reference>
<reference key="15">
    <citation type="journal article" date="2009" name="Sci. Signal.">
        <title>Quantitative phosphoproteomic analysis of T cell receptor signaling reveals system-wide modulation of protein-protein interactions.</title>
        <authorList>
            <person name="Mayya V."/>
            <person name="Lundgren D.H."/>
            <person name="Hwang S.-I."/>
            <person name="Rezaul K."/>
            <person name="Wu L."/>
            <person name="Eng J.K."/>
            <person name="Rodionov V."/>
            <person name="Han D.K."/>
        </authorList>
    </citation>
    <scope>IDENTIFICATION BY MASS SPECTROMETRY [LARGE SCALE ANALYSIS]</scope>
    <source>
        <tissue>Leukemic T-cell</tissue>
    </source>
</reference>
<reference key="16">
    <citation type="journal article" date="2013" name="J. Proteome Res.">
        <title>Toward a comprehensive characterization of a human cancer cell phosphoproteome.</title>
        <authorList>
            <person name="Zhou H."/>
            <person name="Di Palma S."/>
            <person name="Preisinger C."/>
            <person name="Peng M."/>
            <person name="Polat A.N."/>
            <person name="Heck A.J."/>
            <person name="Mohammed S."/>
        </authorList>
    </citation>
    <scope>PHOSPHORYLATION [LARGE SCALE ANALYSIS] AT SER-395; SER-504; SER-826 AND SER-890</scope>
    <scope>IDENTIFICATION BY MASS SPECTROMETRY [LARGE SCALE ANALYSIS]</scope>
    <source>
        <tissue>Cervix carcinoma</tissue>
        <tissue>Erythroleukemia</tissue>
    </source>
</reference>
<reference key="17">
    <citation type="journal article" date="2014" name="J. Proteomics">
        <title>An enzyme assisted RP-RPLC approach for in-depth analysis of human liver phosphoproteome.</title>
        <authorList>
            <person name="Bian Y."/>
            <person name="Song C."/>
            <person name="Cheng K."/>
            <person name="Dong M."/>
            <person name="Wang F."/>
            <person name="Huang J."/>
            <person name="Sun D."/>
            <person name="Wang L."/>
            <person name="Ye M."/>
            <person name="Zou H."/>
        </authorList>
    </citation>
    <scope>PHOSPHORYLATION [LARGE SCALE ANALYSIS] AT SER-1029</scope>
    <scope>IDENTIFICATION BY MASS SPECTROMETRY [LARGE SCALE ANALYSIS]</scope>
    <source>
        <tissue>Liver</tissue>
    </source>
</reference>
<reference key="18">
    <citation type="journal article" date="2018" name="Hum. Genet.">
        <title>De novo mutations in MED13, a component of the Mediator complex, are associated with a novel neurodevelopmental disorder.</title>
        <authorList>
            <consortium name="DDD study"/>
            <person name="Snijders Blok L."/>
            <person name="Hiatt S.M."/>
            <person name="Bowling K.M."/>
            <person name="Prokop J.W."/>
            <person name="Engel K.L."/>
            <person name="Cochran J.N."/>
            <person name="Bebin E.M."/>
            <person name="Bijlsma E.K."/>
            <person name="Ruivenkamp C.A.L."/>
            <person name="Terhal P."/>
            <person name="Simon M.E.H."/>
            <person name="Smith R."/>
            <person name="Hurst J.A."/>
            <person name="McLaughlin H."/>
            <person name="Person R."/>
            <person name="Crunk A."/>
            <person name="Wangler M.F."/>
            <person name="Streff H."/>
            <person name="Symonds J.D."/>
            <person name="Zuberi S.M."/>
            <person name="Elliott K.S."/>
            <person name="Sanders V.R."/>
            <person name="Masunga A."/>
            <person name="Hopkin R.J."/>
            <person name="Dubbs H.A."/>
            <person name="Ortiz-Gonzalez X.R."/>
            <person name="Pfundt R."/>
            <person name="Brunner H.G."/>
            <person name="Fisher S.E."/>
            <person name="Kleefstra T."/>
            <person name="Cooper G.M."/>
        </authorList>
    </citation>
    <scope>INVOLVEMENT IN MRD61</scope>
    <scope>VARIANTS MRD61 131-LEU--LEU-2174 DEL; ILE-326; THR-326 DEL; GLN-327; SER-327; THR-540; 582-LEU--LEU-2174 DEL; 1400-ARG--LEU-2174 DEL; LYS-2060 AND VAL-2064</scope>
    <scope>CHARACTERIZATION OF VARIANT MRD61 1400-ARG--LEU-2174 DEL</scope>
</reference>
<protein>
    <recommendedName>
        <fullName evidence="10">Mediator of RNA polymerase II transcription subunit 13</fullName>
    </recommendedName>
    <alternativeName>
        <fullName>Activator-recruited cofactor 250 kDa component</fullName>
        <shortName>ARC250</shortName>
    </alternativeName>
    <alternativeName>
        <fullName>Mediator complex subunit 13</fullName>
    </alternativeName>
    <alternativeName>
        <fullName>Thyroid hormone receptor-associated protein 1</fullName>
    </alternativeName>
    <alternativeName>
        <fullName>Thyroid hormone receptor-associated protein complex 240 kDa component</fullName>
        <shortName>Trap240</shortName>
    </alternativeName>
    <alternativeName>
        <fullName>Vitamin D3 receptor-interacting protein complex component DRIP250</fullName>
        <shortName>DRIP250</shortName>
    </alternativeName>
</protein>